<protein>
    <recommendedName>
        <fullName evidence="1">CinA-like protein</fullName>
    </recommendedName>
</protein>
<proteinExistence type="inferred from homology"/>
<evidence type="ECO:0000255" key="1">
    <source>
        <dbReference type="HAMAP-Rule" id="MF_00226"/>
    </source>
</evidence>
<name>CINAL_LEPBA</name>
<gene>
    <name type="ordered locus">LBF_2034</name>
</gene>
<reference key="1">
    <citation type="journal article" date="2008" name="PLoS ONE">
        <title>Genome sequence of the saprophyte Leptospira biflexa provides insights into the evolution of Leptospira and the pathogenesis of leptospirosis.</title>
        <authorList>
            <person name="Picardeau M."/>
            <person name="Bulach D.M."/>
            <person name="Bouchier C."/>
            <person name="Zuerner R.L."/>
            <person name="Zidane N."/>
            <person name="Wilson P.J."/>
            <person name="Creno S."/>
            <person name="Kuczek E.S."/>
            <person name="Bommezzadri S."/>
            <person name="Davis J.C."/>
            <person name="McGrath A."/>
            <person name="Johnson M.J."/>
            <person name="Boursaux-Eude C."/>
            <person name="Seemann T."/>
            <person name="Rouy Z."/>
            <person name="Coppel R.L."/>
            <person name="Rood J.I."/>
            <person name="Lajus A."/>
            <person name="Davies J.K."/>
            <person name="Medigue C."/>
            <person name="Adler B."/>
        </authorList>
    </citation>
    <scope>NUCLEOTIDE SEQUENCE [LARGE SCALE GENOMIC DNA]</scope>
    <source>
        <strain>Patoc 1 / Ames</strain>
    </source>
</reference>
<organism>
    <name type="scientific">Leptospira biflexa serovar Patoc (strain Patoc 1 / Ames)</name>
    <dbReference type="NCBI Taxonomy" id="355278"/>
    <lineage>
        <taxon>Bacteria</taxon>
        <taxon>Pseudomonadati</taxon>
        <taxon>Spirochaetota</taxon>
        <taxon>Spirochaetia</taxon>
        <taxon>Leptospirales</taxon>
        <taxon>Leptospiraceae</taxon>
        <taxon>Leptospira</taxon>
    </lineage>
</organism>
<feature type="chain" id="PRO_1000100325" description="CinA-like protein">
    <location>
        <begin position="1"/>
        <end position="417"/>
    </location>
</feature>
<comment type="similarity">
    <text evidence="1">Belongs to the CinA family.</text>
</comment>
<accession>B0SB28</accession>
<dbReference type="EMBL" id="CP000777">
    <property type="protein sequence ID" value="ABZ94534.1"/>
    <property type="molecule type" value="Genomic_DNA"/>
</dbReference>
<dbReference type="RefSeq" id="WP_012389060.1">
    <property type="nucleotide sequence ID" value="NC_010842.1"/>
</dbReference>
<dbReference type="SMR" id="B0SB28"/>
<dbReference type="KEGG" id="lbf:LBF_2034"/>
<dbReference type="HOGENOM" id="CLU_030805_9_3_12"/>
<dbReference type="CDD" id="cd00885">
    <property type="entry name" value="cinA"/>
    <property type="match status" value="1"/>
</dbReference>
<dbReference type="Gene3D" id="3.90.950.20">
    <property type="entry name" value="CinA-like"/>
    <property type="match status" value="1"/>
</dbReference>
<dbReference type="Gene3D" id="3.40.980.10">
    <property type="entry name" value="MoaB/Mog-like domain"/>
    <property type="match status" value="1"/>
</dbReference>
<dbReference type="HAMAP" id="MF_00226_B">
    <property type="entry name" value="CinA_B"/>
    <property type="match status" value="1"/>
</dbReference>
<dbReference type="InterPro" id="IPR050101">
    <property type="entry name" value="CinA"/>
</dbReference>
<dbReference type="InterPro" id="IPR036653">
    <property type="entry name" value="CinA-like_C"/>
</dbReference>
<dbReference type="InterPro" id="IPR008136">
    <property type="entry name" value="CinA_C"/>
</dbReference>
<dbReference type="InterPro" id="IPR008135">
    <property type="entry name" value="Competence-induced_CinA"/>
</dbReference>
<dbReference type="InterPro" id="IPR036425">
    <property type="entry name" value="MoaB/Mog-like_dom_sf"/>
</dbReference>
<dbReference type="InterPro" id="IPR001453">
    <property type="entry name" value="MoaB/Mog_dom"/>
</dbReference>
<dbReference type="NCBIfam" id="TIGR00199">
    <property type="entry name" value="PncC_domain"/>
    <property type="match status" value="1"/>
</dbReference>
<dbReference type="PANTHER" id="PTHR13939">
    <property type="entry name" value="NICOTINAMIDE-NUCLEOTIDE AMIDOHYDROLASE PNCC"/>
    <property type="match status" value="1"/>
</dbReference>
<dbReference type="PANTHER" id="PTHR13939:SF0">
    <property type="entry name" value="NMN AMIDOHYDROLASE-LIKE PROTEIN YFAY"/>
    <property type="match status" value="1"/>
</dbReference>
<dbReference type="Pfam" id="PF02464">
    <property type="entry name" value="CinA"/>
    <property type="match status" value="1"/>
</dbReference>
<dbReference type="Pfam" id="PF00994">
    <property type="entry name" value="MoCF_biosynth"/>
    <property type="match status" value="1"/>
</dbReference>
<dbReference type="PIRSF" id="PIRSF006728">
    <property type="entry name" value="CinA"/>
    <property type="match status" value="1"/>
</dbReference>
<dbReference type="SMART" id="SM00852">
    <property type="entry name" value="MoCF_biosynth"/>
    <property type="match status" value="1"/>
</dbReference>
<dbReference type="SUPFAM" id="SSF142433">
    <property type="entry name" value="CinA-like"/>
    <property type="match status" value="1"/>
</dbReference>
<dbReference type="SUPFAM" id="SSF53218">
    <property type="entry name" value="Molybdenum cofactor biosynthesis proteins"/>
    <property type="match status" value="1"/>
</dbReference>
<sequence length="417" mass="46456">MTPYIVILSTGSELTAGRSVDTNSGWIANQLFELGWKVKKIITLPDDPNLIFKELEALQSLAKEIPVLAIMTGGLGPTEDDYTLETVLKLTGKTSYAVEKAKIRLTKIYEARGKDYKDILPTVFRQTNVPEGCKTLDNSVGIAVGFIESLGENSYLVCMPGVPSEMTEMFKRRLVPELKKMYPRENLIQKTKWLWNIGESLFQNEFIEPNREVYFKETEWGVTANRGYIKCIFQSTNDVMLDTILKSLEKQYPDLISDDVFQYVHEQLLYEKWTISVVESCTGGLLGKKLTERAGSSAYFMGGFLTYSNEMKSNLLGIPKETIETFGAVSDEVAFAMVDGLCLKTGTDFGVSITGIAGPEGGSEEKPVGTVCIGLKEPNGKIKVHRYLFPGNRESIRENASNTALFLIYQSLKGKVV</sequence>